<evidence type="ECO:0000250" key="1">
    <source>
        <dbReference type="UniProtKB" id="Q5GH66"/>
    </source>
</evidence>
<evidence type="ECO:0000255" key="2"/>
<evidence type="ECO:0000256" key="3">
    <source>
        <dbReference type="SAM" id="MobiDB-lite"/>
    </source>
</evidence>
<evidence type="ECO:0000303" key="4">
    <source ref="1"/>
</evidence>
<evidence type="ECO:0000305" key="5"/>
<name>XKR5_PANTR</name>
<protein>
    <recommendedName>
        <fullName evidence="5">XK-related protein 5</fullName>
    </recommendedName>
</protein>
<reference key="1">
    <citation type="submission" date="2004-07" db="EMBL/GenBank/DDBJ databases">
        <title>A superfamily of XK-related genes (XRG) widely expressed in vertebrates and invertebrates.</title>
        <authorList>
            <person name="Huang C.-H."/>
            <person name="Chen Y."/>
        </authorList>
    </citation>
    <scope>NUCLEOTIDE SEQUENCE [MRNA]</scope>
</reference>
<keyword id="KW-1003">Cell membrane</keyword>
<keyword id="KW-0472">Membrane</keyword>
<keyword id="KW-1185">Reference proteome</keyword>
<keyword id="KW-0812">Transmembrane</keyword>
<keyword id="KW-1133">Transmembrane helix</keyword>
<accession>Q49LS3</accession>
<gene>
    <name evidence="1" type="primary">XKR5</name>
    <name evidence="4" type="synonym">XRG5</name>
</gene>
<sequence>MHAGLLGLSALLQAAEQSARLYTVAYYFTTGRLLWGWLALAVLLPGFLVQALSYLWFRADGHPGHCSLVMLHLLQLGVWKRHWDAALTALQKEPEAPHRGWLQLQEADLSALRLLEALLQTGPHLLLQTYVFLASDFTDIVPGVSTLFSWSSLSWALVSYTRFMGFMKPGHLAMPWAALFCQQLWRMGMLGTRVMSLVLFYKAYHFWVFVVAGAHWLVMTFWLVAQQSDIIDSTCHWRLFNLLVGAVYILCYLSFWDSPSRNRMVTFYMVMLLENTILLLLATDFLQGASWTSLQTIAGVLSGFLIGSVSLVIYYSLLHPKSTDIWQGCLRKSCGIAGGDKTERRASPRATDLAGKRTESSGSCQGASYELTILGKPPTPEQVPPEAGLGTQVAVEDSFLSHHHWLWVKLALKTGNMSKINAAFGDDNPVYCPPAWGLSQQDDLQRKALSAQRELPSSSRHPSTLENSSAFEGVSKAEADPLETSSYVSFASDQQDEAPTQNPAATQGEGTPKEGADAVSGTQGKGTGGQQRGGEGQQSSTLYFSATAEVATSSQQEGSPATLQTAHSGRRLGKSSPAQPASPHPVGLAPFPATMADISPILGTGPCRGFCPSAGFPGRTLSISELEEPLEPTRELSHHAAVGVWMSLPQLRTAHEPCLTSTPKSESIQTDCSCREQMKQEPSFFI</sequence>
<proteinExistence type="evidence at transcript level"/>
<organism>
    <name type="scientific">Pan troglodytes</name>
    <name type="common">Chimpanzee</name>
    <dbReference type="NCBI Taxonomy" id="9598"/>
    <lineage>
        <taxon>Eukaryota</taxon>
        <taxon>Metazoa</taxon>
        <taxon>Chordata</taxon>
        <taxon>Craniata</taxon>
        <taxon>Vertebrata</taxon>
        <taxon>Euteleostomi</taxon>
        <taxon>Mammalia</taxon>
        <taxon>Eutheria</taxon>
        <taxon>Euarchontoglires</taxon>
        <taxon>Primates</taxon>
        <taxon>Haplorrhini</taxon>
        <taxon>Catarrhini</taxon>
        <taxon>Hominidae</taxon>
        <taxon>Pan</taxon>
    </lineage>
</organism>
<comment type="subcellular location">
    <subcellularLocation>
        <location evidence="1">Cell membrane</location>
        <topology evidence="2">Multi-pass membrane protein</topology>
    </subcellularLocation>
</comment>
<comment type="similarity">
    <text evidence="5">Belongs to the XK family.</text>
</comment>
<feature type="chain" id="PRO_0000190784" description="XK-related protein 5">
    <location>
        <begin position="1"/>
        <end position="686"/>
    </location>
</feature>
<feature type="transmembrane region" description="Helical" evidence="2">
    <location>
        <begin position="33"/>
        <end position="53"/>
    </location>
</feature>
<feature type="transmembrane region" description="Helical" evidence="2">
    <location>
        <begin position="205"/>
        <end position="225"/>
    </location>
</feature>
<feature type="transmembrane region" description="Helical" evidence="2">
    <location>
        <begin position="239"/>
        <end position="259"/>
    </location>
</feature>
<feature type="transmembrane region" description="Helical" evidence="2">
    <location>
        <begin position="265"/>
        <end position="285"/>
    </location>
</feature>
<feature type="transmembrane region" description="Helical" evidence="2">
    <location>
        <begin position="297"/>
        <end position="317"/>
    </location>
</feature>
<feature type="region of interest" description="Disordered" evidence="3">
    <location>
        <begin position="340"/>
        <end position="362"/>
    </location>
</feature>
<feature type="region of interest" description="Disordered" evidence="3">
    <location>
        <begin position="444"/>
        <end position="470"/>
    </location>
</feature>
<feature type="region of interest" description="Disordered" evidence="3">
    <location>
        <begin position="490"/>
        <end position="589"/>
    </location>
</feature>
<feature type="compositionally biased region" description="Polar residues" evidence="3">
    <location>
        <begin position="455"/>
        <end position="470"/>
    </location>
</feature>
<feature type="compositionally biased region" description="Polar residues" evidence="3">
    <location>
        <begin position="490"/>
        <end position="509"/>
    </location>
</feature>
<feature type="compositionally biased region" description="Gly residues" evidence="3">
    <location>
        <begin position="523"/>
        <end position="536"/>
    </location>
</feature>
<feature type="compositionally biased region" description="Polar residues" evidence="3">
    <location>
        <begin position="550"/>
        <end position="567"/>
    </location>
</feature>
<dbReference type="EMBL" id="AY702908">
    <property type="protein sequence ID" value="AAV83781.1"/>
    <property type="molecule type" value="mRNA"/>
</dbReference>
<dbReference type="RefSeq" id="NP_001028207.1">
    <property type="nucleotide sequence ID" value="NM_001033035.1"/>
</dbReference>
<dbReference type="SMR" id="Q49LS3"/>
<dbReference type="FunCoup" id="Q49LS3">
    <property type="interactions" value="463"/>
</dbReference>
<dbReference type="PaxDb" id="9598-ENSPTRP00000054982"/>
<dbReference type="Ensembl" id="ENSPTRT00000062425.3">
    <property type="protein sequence ID" value="ENSPTRP00000054982.2"/>
    <property type="gene ID" value="ENSPTRG00000019950.7"/>
</dbReference>
<dbReference type="GeneID" id="463970"/>
<dbReference type="KEGG" id="ptr:463970"/>
<dbReference type="CTD" id="389610"/>
<dbReference type="VGNC" id="VGNC:2450">
    <property type="gene designation" value="XKR5"/>
</dbReference>
<dbReference type="eggNOG" id="KOG4790">
    <property type="taxonomic scope" value="Eukaryota"/>
</dbReference>
<dbReference type="GeneTree" id="ENSGT01120000271929"/>
<dbReference type="HOGENOM" id="CLU_025738_1_0_1"/>
<dbReference type="InParanoid" id="Q49LS3"/>
<dbReference type="OMA" id="VDSTCHW"/>
<dbReference type="OrthoDB" id="10851at9604"/>
<dbReference type="TreeFam" id="TF316454"/>
<dbReference type="Proteomes" id="UP000002277">
    <property type="component" value="Chromosome 8"/>
</dbReference>
<dbReference type="Bgee" id="ENSPTRG00000019950">
    <property type="expression patterns" value="Expressed in fibroblast"/>
</dbReference>
<dbReference type="GO" id="GO:0016020">
    <property type="term" value="C:membrane"/>
    <property type="evidence" value="ECO:0000318"/>
    <property type="project" value="GO_Central"/>
</dbReference>
<dbReference type="GO" id="GO:0005886">
    <property type="term" value="C:plasma membrane"/>
    <property type="evidence" value="ECO:0000250"/>
    <property type="project" value="UniProtKB"/>
</dbReference>
<dbReference type="InterPro" id="IPR018629">
    <property type="entry name" value="XK-rel"/>
</dbReference>
<dbReference type="InterPro" id="IPR050895">
    <property type="entry name" value="XK-related_scramblase"/>
</dbReference>
<dbReference type="PANTHER" id="PTHR16024">
    <property type="entry name" value="XK-RELATED PROTEIN"/>
    <property type="match status" value="1"/>
</dbReference>
<dbReference type="PANTHER" id="PTHR16024:SF15">
    <property type="entry name" value="XK-RELATED PROTEIN 5"/>
    <property type="match status" value="1"/>
</dbReference>
<dbReference type="Pfam" id="PF09815">
    <property type="entry name" value="XK-related"/>
    <property type="match status" value="1"/>
</dbReference>